<reference key="1">
    <citation type="journal article" date="1998" name="FEBS Lett.">
        <title>Characterization of a novel structural member, LukE-LukD, of the bi-component staphylococcal leucotoxins family.</title>
        <authorList>
            <person name="Gravet A."/>
            <person name="Colin D.A."/>
            <person name="Keller D."/>
            <person name="Giradot R."/>
            <person name="Monteil H."/>
            <person name="Prevost G."/>
        </authorList>
    </citation>
    <scope>NUCLEOTIDE SEQUENCE [GENOMIC DNA]</scope>
    <scope>PROTEIN SEQUENCE OF 29-46</scope>
    <scope>FUNCTION</scope>
    <scope>SUBUNIT</scope>
    <scope>INDUCTION</scope>
    <scope>SUBCELLULAR LOCATION</scope>
    <source>
        <strain>Newman</strain>
    </source>
</reference>
<gene>
    <name type="primary">lukE</name>
</gene>
<protein>
    <recommendedName>
        <fullName>Leucotoxin LukE</fullName>
    </recommendedName>
</protein>
<proteinExistence type="evidence at protein level"/>
<comment type="function">
    <text evidence="2">Part of a bi-component leucotoxin that acts by forming pores in the membrane of the target cells. LukE-LukD is as effective as the Panton-Valentine leucocidin (PVL) for inducing dermonecrosis when injected in the rabbit skin, but not hemolytic and poorly leucotoxic on human blood cells compared to other leucotoxins expressed by S.aureus.</text>
</comment>
<comment type="subunit">
    <text evidence="1 2">Toxicity requires sequential binding and synergistic association of a class S and a class F component which form heterooligomeric complexes (By similarity). LukE (class S) associates with LukD (class F). LukE can also associate with HlgB.</text>
</comment>
<comment type="interaction">
    <interactant intactId="EBI-16027720">
        <id>O54081</id>
    </interactant>
    <interactant intactId="EBI-489374">
        <id>P51681</id>
        <label>CCR5</label>
    </interactant>
    <organismsDiffer>true</organismsDiffer>
    <experiments>2</experiments>
</comment>
<comment type="subcellular location">
    <subcellularLocation>
        <location evidence="2">Secreted</location>
    </subcellularLocation>
</comment>
<comment type="induction">
    <text evidence="2">Expressed at the late exponential growth. Is cotranscribed with lukD.</text>
</comment>
<comment type="similarity">
    <text evidence="3">Belongs to the aerolysin family.</text>
</comment>
<name>LUKE_STAAU</name>
<dbReference type="EMBL" id="Y13225">
    <property type="protein sequence ID" value="CAA73667.1"/>
    <property type="molecule type" value="Genomic_DNA"/>
</dbReference>
<dbReference type="SMR" id="O54081"/>
<dbReference type="DIP" id="DIP-60119N"/>
<dbReference type="IntAct" id="O54081">
    <property type="interactions" value="1"/>
</dbReference>
<dbReference type="ABCD" id="O54081">
    <property type="antibodies" value="2 sequenced antibodies"/>
</dbReference>
<dbReference type="PHI-base" id="PHI:10306"/>
<dbReference type="PHI-base" id="PHI:10918"/>
<dbReference type="PHI-base" id="PHI:123360"/>
<dbReference type="GO" id="GO:0005576">
    <property type="term" value="C:extracellular region"/>
    <property type="evidence" value="ECO:0007669"/>
    <property type="project" value="UniProtKB-SubCell"/>
</dbReference>
<dbReference type="GO" id="GO:0090729">
    <property type="term" value="F:toxin activity"/>
    <property type="evidence" value="ECO:0007669"/>
    <property type="project" value="UniProtKB-KW"/>
</dbReference>
<dbReference type="GO" id="GO:0051715">
    <property type="term" value="P:cytolysis in another organism"/>
    <property type="evidence" value="ECO:0007669"/>
    <property type="project" value="InterPro"/>
</dbReference>
<dbReference type="Gene3D" id="2.70.240.10">
    <property type="entry name" value="Leukocidin/porin MspA"/>
    <property type="match status" value="1"/>
</dbReference>
<dbReference type="InterPro" id="IPR003963">
    <property type="entry name" value="Bi-component_toxin_staph"/>
</dbReference>
<dbReference type="InterPro" id="IPR016183">
    <property type="entry name" value="Leukocidin/Hemolysin_toxin"/>
</dbReference>
<dbReference type="InterPro" id="IPR036435">
    <property type="entry name" value="Leukocidin/porin_MspA_sf"/>
</dbReference>
<dbReference type="NCBIfam" id="TIGR01002">
    <property type="entry name" value="hlyII"/>
    <property type="match status" value="1"/>
</dbReference>
<dbReference type="Pfam" id="PF07968">
    <property type="entry name" value="Leukocidin"/>
    <property type="match status" value="1"/>
</dbReference>
<dbReference type="PRINTS" id="PR01468">
    <property type="entry name" value="BICOMPNTOXIN"/>
</dbReference>
<dbReference type="SUPFAM" id="SSF56959">
    <property type="entry name" value="Leukocidin-like"/>
    <property type="match status" value="1"/>
</dbReference>
<sequence length="314" mass="35243">MFKKKMLAASLSVGLIAPLASPIQESRANTNIENIGDGAEVIKRTEDVSSKKWGVTQNVQFDFVKDKKYNKDALIVKMQGFINSRTSFSDVKGRGYELTKRLIWPFQYNIGLTTKDPNVSLINSITLPKTKIETTDVGQTLGYNIGGNFQSAPSIGGNGSFNYSKTISYTQKSYVSEVDKQNSKSVKWGVKANKFVTPDGKKFAHDRYLFVQSPNGPTGSAREYFAPDNQLPPLVQSGFNPSFITTLSHEKGSKLIRVNLKFSYGRNLDITYATLFPRTGIYAERKHNAFVNRNFVVRYKVNWKTHEIKVKGHN</sequence>
<accession>O54081</accession>
<feature type="signal peptide" evidence="2">
    <location>
        <begin position="1"/>
        <end position="28"/>
    </location>
</feature>
<feature type="chain" id="PRO_5000147158" description="Leucotoxin LukE">
    <location>
        <begin position="29"/>
        <end position="314"/>
    </location>
</feature>
<keyword id="KW-0204">Cytolysis</keyword>
<keyword id="KW-0903">Direct protein sequencing</keyword>
<keyword id="KW-0964">Secreted</keyword>
<keyword id="KW-0732">Signal</keyword>
<keyword id="KW-0800">Toxin</keyword>
<keyword id="KW-0843">Virulence</keyword>
<organism>
    <name type="scientific">Staphylococcus aureus</name>
    <dbReference type="NCBI Taxonomy" id="1280"/>
    <lineage>
        <taxon>Bacteria</taxon>
        <taxon>Bacillati</taxon>
        <taxon>Bacillota</taxon>
        <taxon>Bacilli</taxon>
        <taxon>Bacillales</taxon>
        <taxon>Staphylococcaceae</taxon>
        <taxon>Staphylococcus</taxon>
    </lineage>
</organism>
<evidence type="ECO:0000250" key="1"/>
<evidence type="ECO:0000269" key="2">
    <source>
    </source>
</evidence>
<evidence type="ECO:0000305" key="3"/>